<gene>
    <name evidence="1" type="primary">E6</name>
</gene>
<reference key="1">
    <citation type="journal article" date="1989" name="J. Virol.">
        <title>Cloning and partial DNA sequencing of two new human papillomavirus types associated with condylomas and low-grade cervical neoplasia.</title>
        <authorList>
            <person name="Loerincz A.T."/>
            <person name="Quinn A.P."/>
            <person name="Goldsborough M.D."/>
            <person name="Schmidt B.J."/>
            <person name="Temple G.F."/>
        </authorList>
    </citation>
    <scope>NUCLEOTIDE SEQUENCE [GENOMIC DNA]</scope>
</reference>
<name>VE6_HPV43</name>
<feature type="chain" id="PRO_0000133362" description="Protein E6">
    <location>
        <begin position="1"/>
        <end position="155"/>
    </location>
</feature>
<feature type="zinc finger region" evidence="1">
    <location>
        <begin position="31"/>
        <end position="67"/>
    </location>
</feature>
<feature type="zinc finger region" evidence="1">
    <location>
        <begin position="104"/>
        <end position="140"/>
    </location>
</feature>
<comment type="function">
    <text>This protein may be involved in the oncogenic potential of this virus (cervical neoplasia-associated virus).</text>
</comment>
<comment type="function">
    <text evidence="1">Plays a major role in the induction and maintenance of cellular transformation. E6 associates with host UBE3A/E6-AP ubiquitin-protein ligase and modulates its activity. Sequesters tumor suppressor TP53 in the host cytoplasm and modulates its activity by interacting with host EP300 that results in the reduction of TP53 acetylation and activation. In turn, apoptosis induced by DNA damage is inhibited. E6 also protects host keratinocytes from apoptosis by mediating the degradation of host BAK1. May also inhibit host immune response.</text>
</comment>
<comment type="subunit">
    <text evidence="1">Forms homodimers. Interacts with ubiquitin-protein ligase UBE3A/E6-AP; this interaction stimulates UBE3A ubiquitin activity. Interacts with host TP53 and EP300; this interaction inhibits TP53 activity.</text>
</comment>
<comment type="subcellular location">
    <subcellularLocation>
        <location evidence="1">Host cytoplasm</location>
    </subcellularLocation>
    <subcellularLocation>
        <location evidence="1">Host nucleus</location>
    </subcellularLocation>
</comment>
<comment type="miscellaneous">
    <text evidence="1">Belongs to the low risk human alphapapillomavirus family. The cancer-causing human papillomavirus E6 protein has a unique carboxy terminal PDZ domain containing substrate but low risk E6s do not possess this domain.</text>
</comment>
<comment type="similarity">
    <text evidence="2">Belongs to the papillomaviridae E6 protein family.</text>
</comment>
<organism>
    <name type="scientific">Human papillomavirus 43</name>
    <dbReference type="NCBI Taxonomy" id="10591"/>
    <lineage>
        <taxon>Viruses</taxon>
        <taxon>Monodnaviria</taxon>
        <taxon>Shotokuvirae</taxon>
        <taxon>Cossaviricota</taxon>
        <taxon>Papovaviricetes</taxon>
        <taxon>Zurhausenvirales</taxon>
        <taxon>Papillomaviridae</taxon>
        <taxon>Firstpapillomavirinae</taxon>
        <taxon>Alphapapillomavirus</taxon>
        <taxon>Alphapapillomavirus 8</taxon>
    </lineage>
</organism>
<organismHost>
    <name type="scientific">Homo sapiens</name>
    <name type="common">Human</name>
    <dbReference type="NCBI Taxonomy" id="9606"/>
</organismHost>
<sequence>MSARSCSQNARTIFELCDECNITLPTLQIGCIFCKKWLLTTEVLSFAFRDLRVVWRDGYPFAACLACLQFHGKISQYRHFDYAAYADTVEEETKQTVFDLCIRCCKCHKPLSPVEKVQHIVQKAQFFKIHSVWKGYCLHCWKSCMEKRRRSETMC</sequence>
<proteinExistence type="inferred from homology"/>
<keyword id="KW-0010">Activator</keyword>
<keyword id="KW-0238">DNA-binding</keyword>
<keyword id="KW-0244">Early protein</keyword>
<keyword id="KW-1035">Host cytoplasm</keyword>
<keyword id="KW-1048">Host nucleus</keyword>
<keyword id="KW-0945">Host-virus interaction</keyword>
<keyword id="KW-1090">Inhibition of host innate immune response by virus</keyword>
<keyword id="KW-0479">Metal-binding</keyword>
<keyword id="KW-1119">Modulation of host cell apoptosis by virus</keyword>
<keyword id="KW-0804">Transcription</keyword>
<keyword id="KW-0805">Transcription regulation</keyword>
<keyword id="KW-0899">Viral immunoevasion</keyword>
<keyword id="KW-0862">Zinc</keyword>
<keyword id="KW-0863">Zinc-finger</keyword>
<evidence type="ECO:0000255" key="1">
    <source>
        <dbReference type="HAMAP-Rule" id="MF_04006"/>
    </source>
</evidence>
<evidence type="ECO:0000305" key="2"/>
<dbReference type="EMBL" id="M27022">
    <property type="protein sequence ID" value="AAA63453.1"/>
    <property type="molecule type" value="Genomic_DNA"/>
</dbReference>
<dbReference type="PIR" id="A34144">
    <property type="entry name" value="W6WL43"/>
</dbReference>
<dbReference type="SMR" id="P19709"/>
<dbReference type="GO" id="GO:0030430">
    <property type="term" value="C:host cell cytoplasm"/>
    <property type="evidence" value="ECO:0007669"/>
    <property type="project" value="UniProtKB-SubCell"/>
</dbReference>
<dbReference type="GO" id="GO:0042025">
    <property type="term" value="C:host cell nucleus"/>
    <property type="evidence" value="ECO:0007669"/>
    <property type="project" value="UniProtKB-SubCell"/>
</dbReference>
<dbReference type="GO" id="GO:0003677">
    <property type="term" value="F:DNA binding"/>
    <property type="evidence" value="ECO:0007669"/>
    <property type="project" value="UniProtKB-UniRule"/>
</dbReference>
<dbReference type="GO" id="GO:0008270">
    <property type="term" value="F:zinc ion binding"/>
    <property type="evidence" value="ECO:0007669"/>
    <property type="project" value="UniProtKB-KW"/>
</dbReference>
<dbReference type="GO" id="GO:0006351">
    <property type="term" value="P:DNA-templated transcription"/>
    <property type="evidence" value="ECO:0007669"/>
    <property type="project" value="UniProtKB-UniRule"/>
</dbReference>
<dbReference type="GO" id="GO:0006355">
    <property type="term" value="P:regulation of DNA-templated transcription"/>
    <property type="evidence" value="ECO:0007669"/>
    <property type="project" value="UniProtKB-UniRule"/>
</dbReference>
<dbReference type="GO" id="GO:0052150">
    <property type="term" value="P:symbiont-mediated perturbation of host apoptosis"/>
    <property type="evidence" value="ECO:0007669"/>
    <property type="project" value="UniProtKB-KW"/>
</dbReference>
<dbReference type="GO" id="GO:0039648">
    <property type="term" value="P:symbiont-mediated perturbation of host ubiquitin-like protein modification"/>
    <property type="evidence" value="ECO:0007669"/>
    <property type="project" value="UniProtKB-UniRule"/>
</dbReference>
<dbReference type="GO" id="GO:0052170">
    <property type="term" value="P:symbiont-mediated suppression of host innate immune response"/>
    <property type="evidence" value="ECO:0007669"/>
    <property type="project" value="UniProtKB-KW"/>
</dbReference>
<dbReference type="GO" id="GO:0039502">
    <property type="term" value="P:symbiont-mediated suppression of host type I interferon-mediated signaling pathway"/>
    <property type="evidence" value="ECO:0007669"/>
    <property type="project" value="UniProtKB-UniRule"/>
</dbReference>
<dbReference type="Gene3D" id="3.30.240.40">
    <property type="entry name" value="E6 early regulatory protein"/>
    <property type="match status" value="2"/>
</dbReference>
<dbReference type="HAMAP" id="MF_04006">
    <property type="entry name" value="HPV_E6"/>
    <property type="match status" value="1"/>
</dbReference>
<dbReference type="InterPro" id="IPR001334">
    <property type="entry name" value="E6"/>
</dbReference>
<dbReference type="InterPro" id="IPR038575">
    <property type="entry name" value="E6_sf"/>
</dbReference>
<dbReference type="Pfam" id="PF00518">
    <property type="entry name" value="E6"/>
    <property type="match status" value="1"/>
</dbReference>
<dbReference type="SUPFAM" id="SSF161229">
    <property type="entry name" value="E6 C-terminal domain-like"/>
    <property type="match status" value="2"/>
</dbReference>
<protein>
    <recommendedName>
        <fullName evidence="1">Protein E6</fullName>
    </recommendedName>
</protein>
<accession>P19709</accession>